<comment type="similarity">
    <text evidence="2">Belongs to the SRP1/TIP1 family. Seripauperin subfamily.</text>
</comment>
<reference key="1">
    <citation type="journal article" date="1996" name="Yeast">
        <title>Sequence of a 39,411 bp DNA fragment covering the left end of chromosome VII of Saccharomyces cerevisiae.</title>
        <authorList>
            <person name="Coissac E."/>
            <person name="Maillier E."/>
            <person name="Robineau S."/>
            <person name="Netter P."/>
        </authorList>
    </citation>
    <scope>NUCLEOTIDE SEQUENCE [GENOMIC DNA]</scope>
    <source>
        <strain>ATCC 96604 / S288c / FY1679</strain>
    </source>
</reference>
<reference key="2">
    <citation type="journal article" date="1997" name="Nature">
        <title>The nucleotide sequence of Saccharomyces cerevisiae chromosome VII.</title>
        <authorList>
            <person name="Tettelin H."/>
            <person name="Agostoni-Carbone M.L."/>
            <person name="Albermann K."/>
            <person name="Albers M."/>
            <person name="Arroyo J."/>
            <person name="Backes U."/>
            <person name="Barreiros T."/>
            <person name="Bertani I."/>
            <person name="Bjourson A.J."/>
            <person name="Brueckner M."/>
            <person name="Bruschi C.V."/>
            <person name="Carignani G."/>
            <person name="Castagnoli L."/>
            <person name="Cerdan E."/>
            <person name="Clemente M.L."/>
            <person name="Coblenz A."/>
            <person name="Coglievina M."/>
            <person name="Coissac E."/>
            <person name="Defoor E."/>
            <person name="Del Bino S."/>
            <person name="Delius H."/>
            <person name="Delneri D."/>
            <person name="de Wergifosse P."/>
            <person name="Dujon B."/>
            <person name="Durand P."/>
            <person name="Entian K.-D."/>
            <person name="Eraso P."/>
            <person name="Escribano V."/>
            <person name="Fabiani L."/>
            <person name="Fartmann B."/>
            <person name="Feroli F."/>
            <person name="Feuermann M."/>
            <person name="Frontali L."/>
            <person name="Garcia-Gonzalez M."/>
            <person name="Garcia-Saez M.I."/>
            <person name="Goffeau A."/>
            <person name="Guerreiro P."/>
            <person name="Hani J."/>
            <person name="Hansen M."/>
            <person name="Hebling U."/>
            <person name="Hernandez K."/>
            <person name="Heumann K."/>
            <person name="Hilger F."/>
            <person name="Hofmann B."/>
            <person name="Indge K.J."/>
            <person name="James C.M."/>
            <person name="Klima R."/>
            <person name="Koetter P."/>
            <person name="Kramer B."/>
            <person name="Kramer W."/>
            <person name="Lauquin G."/>
            <person name="Leuther H."/>
            <person name="Louis E.J."/>
            <person name="Maillier E."/>
            <person name="Marconi A."/>
            <person name="Martegani E."/>
            <person name="Mazon M.J."/>
            <person name="Mazzoni C."/>
            <person name="McReynolds A.D.K."/>
            <person name="Melchioretto P."/>
            <person name="Mewes H.-W."/>
            <person name="Minenkova O."/>
            <person name="Mueller-Auer S."/>
            <person name="Nawrocki A."/>
            <person name="Netter P."/>
            <person name="Neu R."/>
            <person name="Nombela C."/>
            <person name="Oliver S.G."/>
            <person name="Panzeri L."/>
            <person name="Paoluzi S."/>
            <person name="Plevani P."/>
            <person name="Portetelle D."/>
            <person name="Portillo F."/>
            <person name="Potier S."/>
            <person name="Purnelle B."/>
            <person name="Rieger M."/>
            <person name="Riles L."/>
            <person name="Rinaldi T."/>
            <person name="Robben J."/>
            <person name="Rodrigues-Pousada C."/>
            <person name="Rodriguez-Belmonte E."/>
            <person name="Rodriguez-Torres A.M."/>
            <person name="Rose M."/>
            <person name="Ruzzi M."/>
            <person name="Saliola M."/>
            <person name="Sanchez-Perez M."/>
            <person name="Schaefer B."/>
            <person name="Schaefer M."/>
            <person name="Scharfe M."/>
            <person name="Schmidheini T."/>
            <person name="Schreer A."/>
            <person name="Skala J."/>
            <person name="Souciet J.-L."/>
            <person name="Steensma H.Y."/>
            <person name="Talla E."/>
            <person name="Thierry A."/>
            <person name="Vandenbol M."/>
            <person name="van der Aart Q.J.M."/>
            <person name="Van Dyck L."/>
            <person name="Vanoni M."/>
            <person name="Verhasselt P."/>
            <person name="Voet M."/>
            <person name="Volckaert G."/>
            <person name="Wambutt R."/>
            <person name="Watson M.D."/>
            <person name="Weber N."/>
            <person name="Wedler E."/>
            <person name="Wedler H."/>
            <person name="Wipfli P."/>
            <person name="Wolf K."/>
            <person name="Wright L.F."/>
            <person name="Zaccaria P."/>
            <person name="Zimmermann M."/>
            <person name="Zollner A."/>
            <person name="Kleine K."/>
        </authorList>
    </citation>
    <scope>NUCLEOTIDE SEQUENCE [LARGE SCALE GENOMIC DNA]</scope>
    <source>
        <strain>ATCC 204508 / S288c</strain>
    </source>
</reference>
<reference key="3">
    <citation type="journal article" date="2014" name="G3 (Bethesda)">
        <title>The reference genome sequence of Saccharomyces cerevisiae: Then and now.</title>
        <authorList>
            <person name="Engel S.R."/>
            <person name="Dietrich F.S."/>
            <person name="Fisk D.G."/>
            <person name="Binkley G."/>
            <person name="Balakrishnan R."/>
            <person name="Costanzo M.C."/>
            <person name="Dwight S.S."/>
            <person name="Hitz B.C."/>
            <person name="Karra K."/>
            <person name="Nash R.S."/>
            <person name="Weng S."/>
            <person name="Wong E.D."/>
            <person name="Lloyd P."/>
            <person name="Skrzypek M.S."/>
            <person name="Miyasato S.R."/>
            <person name="Simison M."/>
            <person name="Cherry J.M."/>
        </authorList>
    </citation>
    <scope>GENOME REANNOTATION</scope>
    <source>
        <strain>ATCC 204508 / S288c</strain>
    </source>
</reference>
<reference key="4">
    <citation type="journal article" date="2007" name="Genome Res.">
        <title>Approaching a complete repository of sequence-verified protein-encoding clones for Saccharomyces cerevisiae.</title>
        <authorList>
            <person name="Hu Y."/>
            <person name="Rolfs A."/>
            <person name="Bhullar B."/>
            <person name="Murthy T.V.S."/>
            <person name="Zhu C."/>
            <person name="Berger M.F."/>
            <person name="Camargo A.A."/>
            <person name="Kelley F."/>
            <person name="McCarron S."/>
            <person name="Jepson D."/>
            <person name="Richardson A."/>
            <person name="Raphael J."/>
            <person name="Moreira D."/>
            <person name="Taycher E."/>
            <person name="Zuo D."/>
            <person name="Mohr S."/>
            <person name="Kane M.F."/>
            <person name="Williamson J."/>
            <person name="Simpson A.J.G."/>
            <person name="Bulyk M.L."/>
            <person name="Harlow E."/>
            <person name="Marsischky G."/>
            <person name="Kolodner R.D."/>
            <person name="LaBaer J."/>
        </authorList>
    </citation>
    <scope>NUCLEOTIDE SEQUENCE [GENOMIC DNA]</scope>
    <source>
        <strain>ATCC 204508 / S288c</strain>
    </source>
</reference>
<sequence length="120" mass="12850">MVKLTSIAAGVAAIAATASATTTLAQSDERVNLVELGVYVSDIRAHLAQYYMFQAAHPTETYPVEVAEAVFNYGDFTTMLTGIAPDQVTRMITGVPWYSSRLKPAISSALSKDGIYTIAN</sequence>
<organism>
    <name type="scientific">Saccharomyces cerevisiae (strain ATCC 204508 / S288c)</name>
    <name type="common">Baker's yeast</name>
    <dbReference type="NCBI Taxonomy" id="559292"/>
    <lineage>
        <taxon>Eukaryota</taxon>
        <taxon>Fungi</taxon>
        <taxon>Dikarya</taxon>
        <taxon>Ascomycota</taxon>
        <taxon>Saccharomycotina</taxon>
        <taxon>Saccharomycetes</taxon>
        <taxon>Saccharomycetales</taxon>
        <taxon>Saccharomycetaceae</taxon>
        <taxon>Saccharomyces</taxon>
    </lineage>
</organism>
<name>PAU11_YEAST</name>
<accession>P0CE93</accession>
<accession>D6VPE8</accession>
<accession>P53055</accession>
<accession>Q7LI06</accession>
<feature type="signal peptide" evidence="1">
    <location>
        <begin position="1"/>
        <end position="20"/>
    </location>
</feature>
<feature type="chain" id="PRO_0000392928" description="Seripauperin-11">
    <location>
        <begin position="21"/>
        <end position="120"/>
    </location>
</feature>
<protein>
    <recommendedName>
        <fullName>Seripauperin-11</fullName>
    </recommendedName>
</protein>
<evidence type="ECO:0000255" key="1"/>
<evidence type="ECO:0000305" key="2"/>
<keyword id="KW-1185">Reference proteome</keyword>
<keyword id="KW-0732">Signal</keyword>
<gene>
    <name type="primary">PAU11</name>
    <name type="ordered locus">YGL261C</name>
    <name type="ORF">NRF120</name>
</gene>
<proteinExistence type="inferred from homology"/>
<dbReference type="EMBL" id="X94357">
    <property type="protein sequence ID" value="CAA64126.1"/>
    <property type="molecule type" value="Genomic_DNA"/>
</dbReference>
<dbReference type="EMBL" id="Z72783">
    <property type="protein sequence ID" value="CAA96981.1"/>
    <property type="molecule type" value="Genomic_DNA"/>
</dbReference>
<dbReference type="EMBL" id="AY692620">
    <property type="protein sequence ID" value="AAT92639.1"/>
    <property type="molecule type" value="Genomic_DNA"/>
</dbReference>
<dbReference type="EMBL" id="BK006941">
    <property type="protein sequence ID" value="DAA07857.1"/>
    <property type="molecule type" value="Genomic_DNA"/>
</dbReference>
<dbReference type="PIR" id="S61600">
    <property type="entry name" value="S61600"/>
</dbReference>
<dbReference type="RefSeq" id="NP_011253.1">
    <property type="nucleotide sequence ID" value="NM_001181127.1"/>
</dbReference>
<dbReference type="BioGRID" id="31761">
    <property type="interactions" value="53"/>
</dbReference>
<dbReference type="BioGRID" id="33018">
    <property type="interactions" value="32"/>
</dbReference>
<dbReference type="FunCoup" id="P0CE93">
    <property type="interactions" value="38"/>
</dbReference>
<dbReference type="STRING" id="4932.YAL068C"/>
<dbReference type="PaxDb" id="4932-YAL068C"/>
<dbReference type="EnsemblFungi" id="YAL068C_mRNA">
    <property type="protein sequence ID" value="YAL068C"/>
    <property type="gene ID" value="YAL068C"/>
</dbReference>
<dbReference type="EnsemblFungi" id="YGL261C_mRNA">
    <property type="protein sequence ID" value="YGL261C"/>
    <property type="gene ID" value="YGL261C"/>
</dbReference>
<dbReference type="GeneID" id="852630"/>
<dbReference type="KEGG" id="sce:YAL068C"/>
<dbReference type="KEGG" id="sce:YGL261C"/>
<dbReference type="AGR" id="SGD:S000003230"/>
<dbReference type="SGD" id="S000003230">
    <property type="gene designation" value="PAU11"/>
</dbReference>
<dbReference type="VEuPathDB" id="FungiDB:YAL068C"/>
<dbReference type="VEuPathDB" id="FungiDB:YGL261C"/>
<dbReference type="eggNOG" id="ENOG502SR1B">
    <property type="taxonomic scope" value="Eukaryota"/>
</dbReference>
<dbReference type="HOGENOM" id="CLU_136376_0_0_1"/>
<dbReference type="InParanoid" id="P0CE93"/>
<dbReference type="OrthoDB" id="4059055at2759"/>
<dbReference type="BioCyc" id="YEAST:G3O-30729-MONOMER"/>
<dbReference type="PRO" id="PR:P0CE93"/>
<dbReference type="Proteomes" id="UP000002311">
    <property type="component" value="Chromosome VII"/>
</dbReference>
<dbReference type="RNAct" id="P0CE93">
    <property type="molecule type" value="protein"/>
</dbReference>
<dbReference type="ExpressionAtlas" id="P0CE93">
    <property type="expression patterns" value="baseline"/>
</dbReference>
<dbReference type="GO" id="GO:0009277">
    <property type="term" value="C:fungal-type cell wall"/>
    <property type="evidence" value="ECO:0000318"/>
    <property type="project" value="GO_Central"/>
</dbReference>
<dbReference type="GO" id="GO:0005199">
    <property type="term" value="F:structural constituent of cell wall"/>
    <property type="evidence" value="ECO:0000318"/>
    <property type="project" value="GO_Central"/>
</dbReference>
<dbReference type="GO" id="GO:0031505">
    <property type="term" value="P:fungal-type cell wall organization"/>
    <property type="evidence" value="ECO:0000318"/>
    <property type="project" value="GO_Central"/>
</dbReference>
<dbReference type="InterPro" id="IPR000992">
    <property type="entry name" value="SRP1_TIP1"/>
</dbReference>
<dbReference type="InterPro" id="IPR050788">
    <property type="entry name" value="Yeast_SRP1/TIP1_CWP"/>
</dbReference>
<dbReference type="PANTHER" id="PTHR31002:SF34">
    <property type="entry name" value="CELL WALL PROTEIN CWP1-RELATED"/>
    <property type="match status" value="1"/>
</dbReference>
<dbReference type="PANTHER" id="PTHR31002">
    <property type="entry name" value="SERIPAUPERIN"/>
    <property type="match status" value="1"/>
</dbReference>
<dbReference type="Pfam" id="PF00660">
    <property type="entry name" value="SRP1_TIP1"/>
    <property type="match status" value="1"/>
</dbReference>
<dbReference type="PROSITE" id="PS00724">
    <property type="entry name" value="SRP1_TIP1"/>
    <property type="match status" value="1"/>
</dbReference>